<keyword id="KW-0002">3D-structure</keyword>
<keyword id="KW-0903">Direct protein sequencing</keyword>
<keyword id="KW-0443">Lipid metabolism</keyword>
<keyword id="KW-0520">NAD</keyword>
<keyword id="KW-0560">Oxidoreductase</keyword>
<keyword id="KW-0753">Steroid metabolism</keyword>
<name>3BHD_COMTE</name>
<feature type="initiator methionine" description="Removed" evidence="3">
    <location>
        <position position="1"/>
    </location>
</feature>
<feature type="chain" id="PRO_0000054446" description="3-beta-hydroxysteroid dehydrogenase">
    <location>
        <begin position="2"/>
        <end position="254"/>
    </location>
</feature>
<feature type="active site" description="Proton acceptor" evidence="2">
    <location>
        <position position="152"/>
    </location>
</feature>
<feature type="binding site" evidence="1">
    <location>
        <begin position="12"/>
        <end position="40"/>
    </location>
    <ligand>
        <name>NAD(+)</name>
        <dbReference type="ChEBI" id="CHEBI:57540"/>
    </ligand>
</feature>
<feature type="binding site" evidence="1">
    <location>
        <position position="61"/>
    </location>
    <ligand>
        <name>NAD(+)</name>
        <dbReference type="ChEBI" id="CHEBI:57540"/>
    </ligand>
</feature>
<feature type="binding site" evidence="1">
    <location>
        <position position="139"/>
    </location>
    <ligand>
        <name>substrate</name>
    </ligand>
</feature>
<feature type="binding site" evidence="1">
    <location>
        <position position="156"/>
    </location>
    <ligand>
        <name>NAD(+)</name>
        <dbReference type="ChEBI" id="CHEBI:57540"/>
    </ligand>
</feature>
<feature type="sequence conflict" description="In Ref. 1; CAA44977." evidence="5" ref="1">
    <original>GG</original>
    <variation>VV</variation>
    <location>
        <begin position="14"/>
        <end position="15"/>
    </location>
</feature>
<feature type="sequence conflict" description="In Ref. 1; CAA44977." evidence="5" ref="1">
    <location>
        <position position="41"/>
    </location>
</feature>
<feature type="sequence conflict" description="In Ref. 1; CAA44977." evidence="5" ref="1">
    <original>R</original>
    <variation>RR</variation>
    <location>
        <position position="178"/>
    </location>
</feature>
<feature type="sequence conflict" description="In Ref. 3; AA sequence." evidence="5" ref="3">
    <original>S</original>
    <variation>G</variation>
    <location>
        <position position="241"/>
    </location>
</feature>
<feature type="turn" evidence="6">
    <location>
        <begin position="4"/>
        <end position="7"/>
    </location>
</feature>
<feature type="strand" evidence="6">
    <location>
        <begin position="9"/>
        <end position="12"/>
    </location>
</feature>
<feature type="turn" evidence="6">
    <location>
        <begin position="13"/>
        <end position="16"/>
    </location>
</feature>
<feature type="helix" evidence="6">
    <location>
        <begin position="18"/>
        <end position="29"/>
    </location>
</feature>
<feature type="strand" evidence="6">
    <location>
        <begin position="33"/>
        <end position="37"/>
    </location>
</feature>
<feature type="helix" evidence="6">
    <location>
        <begin position="41"/>
        <end position="51"/>
    </location>
</feature>
<feature type="strand" evidence="6">
    <location>
        <begin position="55"/>
        <end position="58"/>
    </location>
</feature>
<feature type="helix" evidence="6">
    <location>
        <begin position="65"/>
        <end position="79"/>
    </location>
</feature>
<feature type="strand" evidence="6">
    <location>
        <begin position="84"/>
        <end position="87"/>
    </location>
</feature>
<feature type="turn" evidence="6">
    <location>
        <begin position="97"/>
        <end position="99"/>
    </location>
</feature>
<feature type="helix" evidence="6">
    <location>
        <begin position="102"/>
        <end position="112"/>
    </location>
</feature>
<feature type="helix" evidence="6">
    <location>
        <begin position="114"/>
        <end position="127"/>
    </location>
</feature>
<feature type="turn" evidence="6">
    <location>
        <begin position="128"/>
        <end position="130"/>
    </location>
</feature>
<feature type="strand" evidence="6">
    <location>
        <begin position="132"/>
        <end position="137"/>
    </location>
</feature>
<feature type="helix" evidence="6">
    <location>
        <begin position="140"/>
        <end position="142"/>
    </location>
</feature>
<feature type="helix" evidence="6">
    <location>
        <begin position="150"/>
        <end position="173"/>
    </location>
</feature>
<feature type="strand" evidence="6">
    <location>
        <begin position="177"/>
        <end position="187"/>
    </location>
</feature>
<feature type="helix" evidence="6">
    <location>
        <begin position="190"/>
        <end position="195"/>
    </location>
</feature>
<feature type="helix" evidence="6">
    <location>
        <begin position="202"/>
        <end position="205"/>
    </location>
</feature>
<feature type="turn" evidence="6">
    <location>
        <begin position="209"/>
        <end position="211"/>
    </location>
</feature>
<feature type="helix" evidence="6">
    <location>
        <begin position="220"/>
        <end position="231"/>
    </location>
</feature>
<feature type="helix" evidence="6">
    <location>
        <begin position="233"/>
        <end position="235"/>
    </location>
</feature>
<feature type="strand" evidence="6">
    <location>
        <begin position="242"/>
        <end position="248"/>
    </location>
</feature>
<feature type="turn" evidence="6">
    <location>
        <begin position="250"/>
        <end position="253"/>
    </location>
</feature>
<comment type="catalytic activity">
    <reaction>
        <text>testosterone + NAD(+) = androst-4-ene-3,17-dione + NADH + H(+)</text>
        <dbReference type="Rhea" id="RHEA:14929"/>
        <dbReference type="ChEBI" id="CHEBI:15378"/>
        <dbReference type="ChEBI" id="CHEBI:16422"/>
        <dbReference type="ChEBI" id="CHEBI:17347"/>
        <dbReference type="ChEBI" id="CHEBI:57540"/>
        <dbReference type="ChEBI" id="CHEBI:57945"/>
        <dbReference type="EC" id="1.1.1.51"/>
    </reaction>
</comment>
<comment type="catalytic activity">
    <reaction>
        <text>testosterone + NADP(+) = androst-4-ene-3,17-dione + NADPH + H(+)</text>
        <dbReference type="Rhea" id="RHEA:14981"/>
        <dbReference type="ChEBI" id="CHEBI:15378"/>
        <dbReference type="ChEBI" id="CHEBI:16422"/>
        <dbReference type="ChEBI" id="CHEBI:17347"/>
        <dbReference type="ChEBI" id="CHEBI:57783"/>
        <dbReference type="ChEBI" id="CHEBI:58349"/>
        <dbReference type="EC" id="1.1.1.51"/>
    </reaction>
</comment>
<comment type="subunit">
    <text evidence="4">Homotetramer.</text>
</comment>
<comment type="similarity">
    <text evidence="5">Belongs to the short-chain dehydrogenases/reductases (SDR) family.</text>
</comment>
<protein>
    <recommendedName>
        <fullName>3-beta-hydroxysteroid dehydrogenase</fullName>
        <ecNumber>1.1.1.51</ecNumber>
    </recommendedName>
</protein>
<dbReference type="EC" id="1.1.1.51"/>
<dbReference type="EMBL" id="X63379">
    <property type="protein sequence ID" value="CAA44977.1"/>
    <property type="molecule type" value="Genomic_DNA"/>
</dbReference>
<dbReference type="EMBL" id="U41265">
    <property type="protein sequence ID" value="AAA25742.1"/>
    <property type="molecule type" value="Genomic_DNA"/>
</dbReference>
<dbReference type="PIR" id="S48129">
    <property type="entry name" value="S48129"/>
</dbReference>
<dbReference type="RefSeq" id="WP_003080542.1">
    <property type="nucleotide sequence ID" value="NZ_UFXL01000001.1"/>
</dbReference>
<dbReference type="PDB" id="1HXH">
    <property type="method" value="X-ray"/>
    <property type="resolution" value="1.22 A"/>
    <property type="chains" value="A/B/C/D=2-254"/>
</dbReference>
<dbReference type="PDBsum" id="1HXH"/>
<dbReference type="SMR" id="P19871"/>
<dbReference type="GeneID" id="63999690"/>
<dbReference type="BioCyc" id="MetaCyc:MONOMER-16923"/>
<dbReference type="BRENDA" id="1.1.1.51">
    <property type="organism ID" value="1590"/>
</dbReference>
<dbReference type="EvolutionaryTrace" id="P19871"/>
<dbReference type="GO" id="GO:0047045">
    <property type="term" value="F:testosterone 17-beta-dehydrogenase (NADP+) activity"/>
    <property type="evidence" value="ECO:0007669"/>
    <property type="project" value="RHEA"/>
</dbReference>
<dbReference type="GO" id="GO:0047035">
    <property type="term" value="F:testosterone dehydrogenase (NAD+) activity"/>
    <property type="evidence" value="ECO:0007669"/>
    <property type="project" value="RHEA"/>
</dbReference>
<dbReference type="GO" id="GO:0008202">
    <property type="term" value="P:steroid metabolic process"/>
    <property type="evidence" value="ECO:0007669"/>
    <property type="project" value="UniProtKB-KW"/>
</dbReference>
<dbReference type="CDD" id="cd05341">
    <property type="entry name" value="3beta-17beta-HSD_like_SDR_c"/>
    <property type="match status" value="1"/>
</dbReference>
<dbReference type="FunFam" id="3.40.50.720:FF:000084">
    <property type="entry name" value="Short-chain dehydrogenase reductase"/>
    <property type="match status" value="1"/>
</dbReference>
<dbReference type="Gene3D" id="3.40.50.720">
    <property type="entry name" value="NAD(P)-binding Rossmann-like Domain"/>
    <property type="match status" value="1"/>
</dbReference>
<dbReference type="InterPro" id="IPR036291">
    <property type="entry name" value="NAD(P)-bd_dom_sf"/>
</dbReference>
<dbReference type="InterPro" id="IPR020904">
    <property type="entry name" value="Sc_DH/Rdtase_CS"/>
</dbReference>
<dbReference type="InterPro" id="IPR002347">
    <property type="entry name" value="SDR_fam"/>
</dbReference>
<dbReference type="PANTHER" id="PTHR43180">
    <property type="entry name" value="3-OXOACYL-(ACYL-CARRIER-PROTEIN) REDUCTASE (AFU_ORTHOLOGUE AFUA_6G11210)"/>
    <property type="match status" value="1"/>
</dbReference>
<dbReference type="PANTHER" id="PTHR43180:SF28">
    <property type="entry name" value="NAD(P)-BINDING ROSSMANN-FOLD SUPERFAMILY PROTEIN"/>
    <property type="match status" value="1"/>
</dbReference>
<dbReference type="Pfam" id="PF13561">
    <property type="entry name" value="adh_short_C2"/>
    <property type="match status" value="1"/>
</dbReference>
<dbReference type="PRINTS" id="PR00081">
    <property type="entry name" value="GDHRDH"/>
</dbReference>
<dbReference type="PRINTS" id="PR00080">
    <property type="entry name" value="SDRFAMILY"/>
</dbReference>
<dbReference type="SUPFAM" id="SSF51735">
    <property type="entry name" value="NAD(P)-binding Rossmann-fold domains"/>
    <property type="match status" value="1"/>
</dbReference>
<dbReference type="PROSITE" id="PS00061">
    <property type="entry name" value="ADH_SHORT"/>
    <property type="match status" value="1"/>
</dbReference>
<accession>P19871</accession>
<accession>Q52587</accession>
<evidence type="ECO:0000250" key="1"/>
<evidence type="ECO:0000255" key="2">
    <source>
        <dbReference type="PROSITE-ProRule" id="PRU10001"/>
    </source>
</evidence>
<evidence type="ECO:0000269" key="3">
    <source>
    </source>
</evidence>
<evidence type="ECO:0000269" key="4">
    <source>
    </source>
</evidence>
<evidence type="ECO:0000305" key="5"/>
<evidence type="ECO:0007829" key="6">
    <source>
        <dbReference type="PDB" id="1HXH"/>
    </source>
</evidence>
<proteinExistence type="evidence at protein level"/>
<sequence length="254" mass="26952">MTNRLQGKVALVTGGASGVGLEVVKLLLGEGAKVAFSDINEAAGQQLAAELGERSMFVRHDVSSEADWTLVMAAVQRRLGTLNVLVNNAGILLPGDMETGRLEDFSRLLKINTESVFIGCQQGIAAMKETGGSIINMASVSSWLPIEQYAGYSASKAAVSALTRAAALSCRKQGYAIRVNSIHPDGIYTPMMQASLPKGVSKEMVLHDPKLNRAGRAYMPERIAQLVLFLASDESSVMSGSELHADNSILGMGL</sequence>
<organism>
    <name type="scientific">Comamonas testosteroni</name>
    <name type="common">Pseudomonas testosteroni</name>
    <dbReference type="NCBI Taxonomy" id="285"/>
    <lineage>
        <taxon>Bacteria</taxon>
        <taxon>Pseudomonadati</taxon>
        <taxon>Pseudomonadota</taxon>
        <taxon>Betaproteobacteria</taxon>
        <taxon>Burkholderiales</taxon>
        <taxon>Comamonadaceae</taxon>
        <taxon>Comamonas</taxon>
    </lineage>
</organism>
<reference key="1">
    <citation type="journal article" date="1993" name="J. Steroid Biochem. Mol. Biol.">
        <title>Cloning, DNA sequencing and expression of (3-17)beta hydroxysteroid dehydrogenase from Pseudomonas testosteroni.</title>
        <authorList>
            <person name="Abalain J.H."/>
            <person name="di Stefano S."/>
            <person name="Amet Y."/>
            <person name="Quemener E."/>
            <person name="Abalain-Colloc M.L."/>
            <person name="Floch H.H."/>
        </authorList>
    </citation>
    <scope>NUCLEOTIDE SEQUENCE [GENOMIC DNA]</scope>
    <source>
        <strain>ATCC 11996 / DSM 50244 / CCUG 1426 / IAM 12419 / JCM 5832 / NCIMB 8955 / NBRC 14951 / NCTC 10698 / NRRL B-2611</strain>
    </source>
</reference>
<reference key="2">
    <citation type="journal article" date="2004" name="J. Steroid Biochem. Mol. Biol.">
        <title>Identification of a novel steroid inducible gene associated with the beta hsd locus of Comamonas testosteroni.</title>
        <authorList>
            <person name="Pruneda-Paz J.L."/>
            <person name="Linares M."/>
            <person name="Cabrera J.E."/>
            <person name="Genti-Raimondi S."/>
        </authorList>
    </citation>
    <scope>NUCLEOTIDE SEQUENCE [GENOMIC DNA]</scope>
    <source>
        <strain>ATCC 11996 / DSM 50244 / CCUG 1426 / IAM 12419 / JCM 5832 / NCIMB 8955 / NBRC 14951 / NCTC 10698 / NRRL B-2611</strain>
    </source>
</reference>
<reference key="3">
    <citation type="journal article" date="1991" name="Eur. J. Biochem.">
        <title>Pseudomonas 3 beta-hydroxysteroid dehydrogenase. Primary structure and relationships to other steroid dehydrogenases.</title>
        <authorList>
            <person name="Yin S.-J."/>
            <person name="Vagelopoulos N."/>
            <person name="Lundquist G."/>
            <person name="Joernvall H."/>
        </authorList>
    </citation>
    <scope>PROTEIN SEQUENCE OF 2-254</scope>
</reference>
<reference key="4">
    <citation type="journal article" date="1996" name="Eur. J. Biochem.">
        <title>Crystallization and crystal packing of recombinant 3 (or 17) beta-hydroxysteroid dehydrogenase from Comamonas testosteroni ATTC 11996.</title>
        <authorList>
            <person name="Benach J."/>
            <person name="Knapp S."/>
            <person name="Oppermann U.C.T."/>
            <person name="Haegllund O."/>
            <person name="Joernvall H."/>
            <person name="Ladenstein R."/>
        </authorList>
    </citation>
    <scope>CRYSTALLIZATION</scope>
    <scope>SUBUNIT</scope>
    <source>
        <strain>ATCC 11996 / DSM 50244 / CCUG 1426 / IAM 12419 / JCM 5832 / NCIMB 8955 / NBRC 14951 / NCTC 10698 / NRRL B-2611</strain>
    </source>
</reference>
<reference key="5">
    <citation type="journal article" date="2002" name="Biochemistry">
        <title>Structure of bacterial 3beta/17beta-hydroxysteroid dehydrogenase at 1.2 A resolution: a model for multiple steroid recognition.</title>
        <authorList>
            <person name="Benach J."/>
            <person name="Filling C."/>
            <person name="Oppermann U.C.T."/>
            <person name="Roversi P."/>
            <person name="Bricogne G."/>
            <person name="Berndt K.D."/>
            <person name="Joernvall H."/>
            <person name="Ladenstein R."/>
        </authorList>
    </citation>
    <scope>X-RAY CRYSTALLOGRAPHY (1.22 ANGSTROMS)</scope>
</reference>